<evidence type="ECO:0000250" key="1">
    <source>
        <dbReference type="UniProtKB" id="Q61474"/>
    </source>
</evidence>
<evidence type="ECO:0000255" key="2">
    <source>
        <dbReference type="PROSITE-ProRule" id="PRU00176"/>
    </source>
</evidence>
<evidence type="ECO:0000256" key="3">
    <source>
        <dbReference type="SAM" id="MobiDB-lite"/>
    </source>
</evidence>
<evidence type="ECO:0000269" key="4">
    <source>
    </source>
</evidence>
<evidence type="ECO:0000269" key="5">
    <source>
    </source>
</evidence>
<evidence type="ECO:0000269" key="6">
    <source>
    </source>
</evidence>
<evidence type="ECO:0000303" key="7">
    <source>
    </source>
</evidence>
<evidence type="ECO:0000305" key="8"/>
<evidence type="ECO:0000312" key="9">
    <source>
        <dbReference type="EMBL" id="BAB13470.1"/>
    </source>
</evidence>
<evidence type="ECO:0000312" key="10">
    <source>
        <dbReference type="Proteomes" id="UP000001940"/>
    </source>
</evidence>
<evidence type="ECO:0000312" key="11">
    <source>
        <dbReference type="WormBase" id="R10E9.1"/>
    </source>
</evidence>
<name>MSI1H_CAEEL</name>
<protein>
    <recommendedName>
        <fullName evidence="8">RNA-binding protein Musashi homolog 1</fullName>
        <shortName evidence="8">Musashi-1</shortName>
    </recommendedName>
</protein>
<feature type="chain" id="PRO_0000458044" description="RNA-binding protein Musashi homolog 1">
    <location>
        <begin position="1"/>
        <end position="320"/>
    </location>
</feature>
<feature type="domain" description="RRM 1" evidence="2">
    <location>
        <begin position="45"/>
        <end position="124"/>
    </location>
</feature>
<feature type="domain" description="RRM 2" evidence="2">
    <location>
        <begin position="134"/>
        <end position="211"/>
    </location>
</feature>
<feature type="region of interest" description="Disordered" evidence="3">
    <location>
        <begin position="1"/>
        <end position="48"/>
    </location>
</feature>
<feature type="region of interest" description="Required for binding to target mRNAs" evidence="5">
    <location>
        <begin position="88"/>
        <end position="93"/>
    </location>
</feature>
<feature type="region of interest" description="Required for binding to target mRNAs" evidence="5">
    <location>
        <begin position="177"/>
        <end position="182"/>
    </location>
</feature>
<feature type="compositionally biased region" description="Low complexity" evidence="3">
    <location>
        <begin position="1"/>
        <end position="14"/>
    </location>
</feature>
<feature type="compositionally biased region" description="Basic and acidic residues" evidence="3">
    <location>
        <begin position="23"/>
        <end position="38"/>
    </location>
</feature>
<feature type="modified residue" description="Phosphothreonine" evidence="6">
    <location>
        <position position="18"/>
    </location>
</feature>
<feature type="modified residue" description="Phosphoserine" evidence="6">
    <location>
        <position position="19"/>
    </location>
</feature>
<feature type="modified residue" description="Phosphoserine" evidence="6">
    <location>
        <position position="34"/>
    </location>
</feature>
<feature type="mutagenesis site" description="Increases short and long term memory retention in response to repeated exposure to diacetyl, a chemical repellent." evidence="6">
    <original>T</original>
    <variation>A</variation>
    <variation>D</variation>
    <location>
        <position position="18"/>
    </location>
</feature>
<feature type="mutagenesis site" description="Increases short term memory retention in response to repeated exposure to diacetyl, a chemical repellent." evidence="6">
    <original>S</original>
    <variation>A</variation>
    <location>
        <position position="19"/>
    </location>
</feature>
<feature type="mutagenesis site" description="Increases short term memory retention in response to repeated exposure to diacetyl, a chemical repellent. No changes in long term memory retention in response to repeated exposure to diacetyl, a chemical repellent." evidence="6">
    <original>S</original>
    <variation>D</variation>
    <location>
        <position position="19"/>
    </location>
</feature>
<feature type="mutagenesis site" description="Increases short and long term memory retention in response to repeated exposure to diacetyl, a chemical repellent." evidence="6">
    <original>S</original>
    <variation>A</variation>
    <location>
        <position position="34"/>
    </location>
</feature>
<feature type="mutagenesis site" description="No changes in short term memory retention in response to repeated exposure to diacetyl, a chemical repellent." evidence="6">
    <original>S</original>
    <variation>D</variation>
    <location>
        <position position="34"/>
    </location>
</feature>
<feature type="mutagenesis site" description="Inhibits binding to the 3'UTR of target mRNAs such as arx-1, arx-2 and arx-3; when associated with 177-A--A-182." evidence="5">
    <original>FGFITF</original>
    <variation>AGAITA</variation>
    <location>
        <begin position="88"/>
        <end position="93"/>
    </location>
</feature>
<feature type="mutagenesis site" description="Inhibits binding to the 3'UTR of target mRNAs such as arx-1, arx-2 and arx-3; when associated with 88-A--A-93." evidence="5">
    <original>FGFVTF</original>
    <variation>AGAVTA</variation>
    <location>
        <begin position="177"/>
        <end position="182"/>
    </location>
</feature>
<comment type="function">
    <text evidence="1 4 5 6">RNA binding protein that regulates the expression of target mRNAs at the translation level (PubMed:24630719). Binds RNA containing the 5'-[GA]U(1-3)AGU-3' motif located in the 3' UTR of the target mRNA (By similarity). Binds to the mRNA of three Arp2/3 complex components arx-1, arx-2 and arx-3 and negatively regulates their translation during association learning (PubMed:24630719). Plays a role in time-dependent memory loss and the retention of conditioned behavior over time, probably through negative regulation of the Arp2/3 actin cytoskeleton branching complex and regulation of synapse size (PubMed:24630719, PubMed:36223338). Required for two aspects of male mating behavior: turning around the hermaphrodite head or tail and vulva location (PubMed:11122376).</text>
</comment>
<comment type="subcellular location">
    <subcellularLocation>
        <location evidence="4">Cytoplasm</location>
    </subcellularLocation>
    <subcellularLocation>
        <location evidence="4">Perikaryon</location>
    </subcellularLocation>
</comment>
<comment type="tissue specificity">
    <text evidence="4 5">Expressed in the gut and in AVA, AFD, RMD, RMED, RMEV, RMER and RMEL neurons (at protein level) (PubMed:24630719). In the tail expressed in neurons and all the ray sensilla (PubMed:11122376). Expressed in male specific C1-C4 neurons (PubMed:11122376).</text>
</comment>
<comment type="developmental stage">
    <text evidence="4">Expressed in the head after the twofold stage of embryonic development (PubMed:11122376). Expressed in neurons in the head and ventral nerve cord in all larval stages (PubMed:11122376). Expressed in RMED, RMEV, RMER and RMEL head neurons of L1 stage larva (PubMed:11122376). Expressed in the tail of L4 stage larva (PubMed:11122376).</text>
</comment>
<comment type="disruption phenotype">
    <text evidence="5">RNAi-mediated knockdown increases short term memory retention in response to repeated exposure to diacetyl, a chemical repellent.</text>
</comment>
<comment type="similarity">
    <text evidence="8">Belongs to the Musashi family.</text>
</comment>
<gene>
    <name evidence="7 11" type="primary">msi-1</name>
    <name evidence="11" type="ORF">R10E9.1</name>
</gene>
<keyword id="KW-0963">Cytoplasm</keyword>
<keyword id="KW-0597">Phosphoprotein</keyword>
<keyword id="KW-1185">Reference proteome</keyword>
<keyword id="KW-0677">Repeat</keyword>
<keyword id="KW-0694">RNA-binding</keyword>
<accession>G5EFS2</accession>
<organism evidence="10">
    <name type="scientific">Caenorhabditis elegans</name>
    <dbReference type="NCBI Taxonomy" id="6239"/>
    <lineage>
        <taxon>Eukaryota</taxon>
        <taxon>Metazoa</taxon>
        <taxon>Ecdysozoa</taxon>
        <taxon>Nematoda</taxon>
        <taxon>Chromadorea</taxon>
        <taxon>Rhabditida</taxon>
        <taxon>Rhabditina</taxon>
        <taxon>Rhabditomorpha</taxon>
        <taxon>Rhabditoidea</taxon>
        <taxon>Rhabditidae</taxon>
        <taxon>Peloderinae</taxon>
        <taxon>Caenorhabditis</taxon>
    </lineage>
</organism>
<dbReference type="EMBL" id="AB036738">
    <property type="protein sequence ID" value="BAB13470.1"/>
    <property type="molecule type" value="mRNA"/>
</dbReference>
<dbReference type="EMBL" id="BX284603">
    <property type="protein sequence ID" value="CAA84667.2"/>
    <property type="molecule type" value="Genomic_DNA"/>
</dbReference>
<dbReference type="PIR" id="T24148">
    <property type="entry name" value="T24148"/>
</dbReference>
<dbReference type="RefSeq" id="NP_001369851.1">
    <property type="nucleotide sequence ID" value="NM_001384060.2"/>
</dbReference>
<dbReference type="RefSeq" id="NP_497799.1">
    <property type="nucleotide sequence ID" value="NM_065398.5"/>
</dbReference>
<dbReference type="SMR" id="G5EFS2"/>
<dbReference type="FunCoup" id="G5EFS2">
    <property type="interactions" value="1212"/>
</dbReference>
<dbReference type="STRING" id="6239.R10E9.1.1"/>
<dbReference type="iPTMnet" id="G5EFS2"/>
<dbReference type="PaxDb" id="6239-R10E9.1"/>
<dbReference type="PeptideAtlas" id="G5EFS2"/>
<dbReference type="EnsemblMetazoa" id="R10E9.1.1">
    <property type="protein sequence ID" value="R10E9.1.1"/>
    <property type="gene ID" value="WBGene00003423"/>
</dbReference>
<dbReference type="EnsemblMetazoa" id="R10E9.1.2">
    <property type="protein sequence ID" value="R10E9.1.2"/>
    <property type="gene ID" value="WBGene00003423"/>
</dbReference>
<dbReference type="GeneID" id="175514"/>
<dbReference type="AGR" id="WB:WBGene00003423"/>
<dbReference type="WormBase" id="R10E9.1">
    <property type="protein sequence ID" value="CE29337"/>
    <property type="gene ID" value="WBGene00003423"/>
    <property type="gene designation" value="msi-1"/>
</dbReference>
<dbReference type="eggNOG" id="KOG4205">
    <property type="taxonomic scope" value="Eukaryota"/>
</dbReference>
<dbReference type="GeneTree" id="ENSGT00940000155420"/>
<dbReference type="HOGENOM" id="CLU_012062_3_3_1"/>
<dbReference type="InParanoid" id="G5EFS2"/>
<dbReference type="OMA" id="NMAGERP"/>
<dbReference type="OrthoDB" id="1875751at2759"/>
<dbReference type="PRO" id="PR:G5EFS2"/>
<dbReference type="Proteomes" id="UP000001940">
    <property type="component" value="Chromosome III"/>
</dbReference>
<dbReference type="Bgee" id="WBGene00003423">
    <property type="expression patterns" value="Expressed in larva and 3 other cell types or tissues"/>
</dbReference>
<dbReference type="GO" id="GO:0005737">
    <property type="term" value="C:cytoplasm"/>
    <property type="evidence" value="ECO:0000314"/>
    <property type="project" value="WormBase"/>
</dbReference>
<dbReference type="GO" id="GO:0043204">
    <property type="term" value="C:perikaryon"/>
    <property type="evidence" value="ECO:0007669"/>
    <property type="project" value="UniProtKB-SubCell"/>
</dbReference>
<dbReference type="GO" id="GO:0003729">
    <property type="term" value="F:mRNA binding"/>
    <property type="evidence" value="ECO:0000315"/>
    <property type="project" value="WormBase"/>
</dbReference>
<dbReference type="GO" id="GO:0050877">
    <property type="term" value="P:nervous system process"/>
    <property type="evidence" value="ECO:0000315"/>
    <property type="project" value="WormBase"/>
</dbReference>
<dbReference type="GO" id="GO:0006417">
    <property type="term" value="P:regulation of translation"/>
    <property type="evidence" value="ECO:0000318"/>
    <property type="project" value="GO_Central"/>
</dbReference>
<dbReference type="CDD" id="cd12576">
    <property type="entry name" value="RRM1_MSI"/>
    <property type="match status" value="1"/>
</dbReference>
<dbReference type="CDD" id="cd12323">
    <property type="entry name" value="RRM2_MSI"/>
    <property type="match status" value="1"/>
</dbReference>
<dbReference type="FunFam" id="3.30.70.330:FF:000020">
    <property type="entry name" value="RNA-binding protein Musashi homolog 2 isoform X1"/>
    <property type="match status" value="1"/>
</dbReference>
<dbReference type="FunFam" id="3.30.70.330:FF:000025">
    <property type="entry name" value="RNA-binding protein Musashi homolog 2 isoform X1"/>
    <property type="match status" value="1"/>
</dbReference>
<dbReference type="Gene3D" id="3.30.70.330">
    <property type="match status" value="2"/>
</dbReference>
<dbReference type="InterPro" id="IPR034126">
    <property type="entry name" value="MSI_RRM2"/>
</dbReference>
<dbReference type="InterPro" id="IPR012677">
    <property type="entry name" value="Nucleotide-bd_a/b_plait_sf"/>
</dbReference>
<dbReference type="InterPro" id="IPR035979">
    <property type="entry name" value="RBD_domain_sf"/>
</dbReference>
<dbReference type="InterPro" id="IPR000504">
    <property type="entry name" value="RRM_dom"/>
</dbReference>
<dbReference type="PANTHER" id="PTHR48032">
    <property type="entry name" value="RNA-BINDING PROTEIN MUSASHI HOMOLOG RBP6"/>
    <property type="match status" value="1"/>
</dbReference>
<dbReference type="PANTHER" id="PTHR48032:SF18">
    <property type="entry name" value="RRM DOMAIN-CONTAINING PROTEIN"/>
    <property type="match status" value="1"/>
</dbReference>
<dbReference type="Pfam" id="PF00076">
    <property type="entry name" value="RRM_1"/>
    <property type="match status" value="2"/>
</dbReference>
<dbReference type="SMART" id="SM00360">
    <property type="entry name" value="RRM"/>
    <property type="match status" value="2"/>
</dbReference>
<dbReference type="SUPFAM" id="SSF54928">
    <property type="entry name" value="RNA-binding domain, RBD"/>
    <property type="match status" value="2"/>
</dbReference>
<dbReference type="PROSITE" id="PS50102">
    <property type="entry name" value="RRM"/>
    <property type="match status" value="2"/>
</dbReference>
<proteinExistence type="evidence at protein level"/>
<sequence>MTTTVSTGATAVATLRETSPPVDGHEEARLNADSDDGSHGSQDPGKMFIGGLSWQTTAENLRDYFGRFGEVNECMVMRDPATKRARGFGFITFVDPSSVDKVLNNREHELDGKKIDPKVAFPKRTQAKLVTKTKKVFIGGLSATSTLEDMKQYFETYGKVEDAMLMFDKATQRHRGFGFVTFDSDEVADKVCEIHFHEINGKMVECKKAQPKEVMLPVQLNKSRAAAARNLYGMPPETLLAYAQYLPRFGGNLMYPNFTNVFNNMPGGYSGLSTPGGSSNRPPHQFDTASLYSLNNGGQLLDSQAQMFMNQQSYHSHSKY</sequence>
<reference evidence="9" key="1">
    <citation type="journal article" date="2000" name="Genes Cells">
        <title>MSI-1, a neural RNA-binding protein, is involved in male mating behaviour in Caenorhabditis elegans.</title>
        <authorList>
            <person name="Yoda A."/>
            <person name="Sawa H."/>
            <person name="Okano H."/>
        </authorList>
    </citation>
    <scope>NUCLEOTIDE SEQUENCE [MRNA]</scope>
    <scope>FUNCTION</scope>
    <scope>SUBCELLULAR LOCATION</scope>
    <scope>TISSUE SPECIFICITY</scope>
    <scope>DEVELOPMENTAL STAGE</scope>
</reference>
<reference evidence="10" key="2">
    <citation type="journal article" date="1998" name="Science">
        <title>Genome sequence of the nematode C. elegans: a platform for investigating biology.</title>
        <authorList>
            <consortium name="The C. elegans sequencing consortium"/>
        </authorList>
    </citation>
    <scope>NUCLEOTIDE SEQUENCE [LARGE SCALE GENOMIC DNA]</scope>
    <source>
        <strain evidence="10">Bristol N2</strain>
    </source>
</reference>
<reference evidence="8" key="3">
    <citation type="journal article" date="2014" name="Cell">
        <title>Forgetting is regulated via Musashi-mediated translational control of the Arp2/3 complex.</title>
        <authorList>
            <person name="Hadziselimovic N."/>
            <person name="Vukojevic V."/>
            <person name="Peter F."/>
            <person name="Milnik A."/>
            <person name="Fastenrath M."/>
            <person name="Fenyves B.G."/>
            <person name="Hieber P."/>
            <person name="Demougin P."/>
            <person name="Vogler C."/>
            <person name="de Quervain D.J."/>
            <person name="Papassotiropoulos A."/>
            <person name="Stetak A."/>
        </authorList>
    </citation>
    <scope>FUNCTION</scope>
    <scope>TISSUE SPECIFICITY</scope>
    <scope>DISRUPTION PHENOTYPE</scope>
    <scope>MUTAGENESIS OF 88-PHE--PHE-93 AND 177-PHE--PHE-182</scope>
</reference>
<reference evidence="8" key="4">
    <citation type="journal article" date="2022" name="PLoS Genet.">
        <title>Phosphorylation of MSI-1 is implicated in the regulation of associative memory in Caenorhabditis elegans.</title>
        <authorList>
            <person name="Mastrandreas P."/>
            <person name="Boglari C."/>
            <person name="Arnold A."/>
            <person name="Peter F."/>
            <person name="de Quervain D.J."/>
            <person name="Papassotiropoulos A."/>
            <person name="Stetak A."/>
        </authorList>
    </citation>
    <scope>FUNCTION</scope>
    <scope>PHOSPHORYLATION AT THR-18; SER-19 AND SER-34</scope>
    <scope>MUTAGENESIS OF THR-18; SER-19 AND SER-34</scope>
</reference>